<name>PHCY1_HOMAM</name>
<accession>Q6KF82</accession>
<reference evidence="4 5" key="1">
    <citation type="journal article" date="1999" name="J. Biol. Chem.">
        <title>Identification, molecular cloning and phylogenetic analysis of a non-respiratory pseudo-hemocyanin of Homarus americanus.</title>
        <authorList>
            <person name="Burmester T."/>
        </authorList>
    </citation>
    <scope>NUCLEOTIDE SEQUENCE [MRNA]</scope>
    <scope>PROTEIN SEQUENCE OF 24-43</scope>
    <scope>SUBUNIT</scope>
    <scope>TISSUE SPECIFICITY</scope>
    <source>
        <tissue evidence="3">Hemolymph</tissue>
        <tissue evidence="5">Thorax</tissue>
    </source>
</reference>
<dbReference type="EMBL" id="AJ132141">
    <property type="protein sequence ID" value="CAB38042.1"/>
    <property type="molecule type" value="mRNA"/>
</dbReference>
<dbReference type="SMR" id="Q6KF82"/>
<dbReference type="GlyCosmos" id="Q6KF82">
    <property type="glycosylation" value="4 sites, No reported glycans"/>
</dbReference>
<dbReference type="EnsemblMetazoa" id="XM_042361206.1">
    <property type="protein sequence ID" value="XP_042217140.1"/>
    <property type="gene ID" value="LOC121862863"/>
</dbReference>
<dbReference type="OrthoDB" id="6371642at2759"/>
<dbReference type="GO" id="GO:0016491">
    <property type="term" value="F:oxidoreductase activity"/>
    <property type="evidence" value="ECO:0007669"/>
    <property type="project" value="InterPro"/>
</dbReference>
<dbReference type="Gene3D" id="1.10.1280.10">
    <property type="entry name" value="Di-copper center containing domain from catechol oxidase"/>
    <property type="match status" value="1"/>
</dbReference>
<dbReference type="Gene3D" id="2.60.40.1520">
    <property type="entry name" value="Hemocyanin, C-terminal domain"/>
    <property type="match status" value="1"/>
</dbReference>
<dbReference type="Gene3D" id="1.20.1370.10">
    <property type="entry name" value="Hemocyanin, N-terminal domain"/>
    <property type="match status" value="1"/>
</dbReference>
<dbReference type="InterPro" id="IPR008922">
    <property type="entry name" value="Di-copper_centre_dom_sf"/>
</dbReference>
<dbReference type="InterPro" id="IPR013788">
    <property type="entry name" value="Hemocyanin/hexamerin"/>
</dbReference>
<dbReference type="InterPro" id="IPR000896">
    <property type="entry name" value="Hemocyanin/hexamerin_mid_dom"/>
</dbReference>
<dbReference type="InterPro" id="IPR005203">
    <property type="entry name" value="Hemocyanin_C"/>
</dbReference>
<dbReference type="InterPro" id="IPR037020">
    <property type="entry name" value="Hemocyanin_C_sf"/>
</dbReference>
<dbReference type="InterPro" id="IPR005204">
    <property type="entry name" value="Hemocyanin_N"/>
</dbReference>
<dbReference type="InterPro" id="IPR036697">
    <property type="entry name" value="Hemocyanin_N_sf"/>
</dbReference>
<dbReference type="InterPro" id="IPR014756">
    <property type="entry name" value="Ig_E-set"/>
</dbReference>
<dbReference type="InterPro" id="IPR002227">
    <property type="entry name" value="Tyrosinase_Cu-bd"/>
</dbReference>
<dbReference type="PANTHER" id="PTHR11511:SF5">
    <property type="entry name" value="FAT-BODY PROTEIN 1-RELATED"/>
    <property type="match status" value="1"/>
</dbReference>
<dbReference type="PANTHER" id="PTHR11511">
    <property type="entry name" value="LARVAL STORAGE PROTEIN/PHENOLOXIDASE"/>
    <property type="match status" value="1"/>
</dbReference>
<dbReference type="Pfam" id="PF03723">
    <property type="entry name" value="Hemocyanin_C"/>
    <property type="match status" value="1"/>
</dbReference>
<dbReference type="Pfam" id="PF00372">
    <property type="entry name" value="Hemocyanin_M"/>
    <property type="match status" value="1"/>
</dbReference>
<dbReference type="Pfam" id="PF03722">
    <property type="entry name" value="Hemocyanin_N"/>
    <property type="match status" value="1"/>
</dbReference>
<dbReference type="PRINTS" id="PR00187">
    <property type="entry name" value="HAEMOCYANIN"/>
</dbReference>
<dbReference type="SUPFAM" id="SSF48056">
    <property type="entry name" value="Di-copper centre-containing domain"/>
    <property type="match status" value="1"/>
</dbReference>
<dbReference type="SUPFAM" id="SSF81296">
    <property type="entry name" value="E set domains"/>
    <property type="match status" value="1"/>
</dbReference>
<dbReference type="SUPFAM" id="SSF48050">
    <property type="entry name" value="Hemocyanin, N-terminal domain"/>
    <property type="match status" value="1"/>
</dbReference>
<dbReference type="PROSITE" id="PS00210">
    <property type="entry name" value="HEMOCYANIN_2"/>
    <property type="match status" value="1"/>
</dbReference>
<dbReference type="PROSITE" id="PS00498">
    <property type="entry name" value="TYROSINASE_2"/>
    <property type="match status" value="1"/>
</dbReference>
<evidence type="ECO:0000255" key="1"/>
<evidence type="ECO:0000256" key="2">
    <source>
        <dbReference type="SAM" id="MobiDB-lite"/>
    </source>
</evidence>
<evidence type="ECO:0000269" key="3">
    <source>
    </source>
</evidence>
<evidence type="ECO:0000305" key="4"/>
<evidence type="ECO:0000312" key="5">
    <source>
        <dbReference type="EMBL" id="CAB38042.1"/>
    </source>
</evidence>
<sequence>SLVVAAAAASPYSGSHDFSGFQRDEPDGVPTAQKQHDINFLLHKLYEPLHEANLKALEDSFDPLTHTANMPDAGVAVNKLMQEVKTQHLEERHHWFSVFNATQREEALLLVKVLLQCQDWPTAIGNAVYFRKMMNEETYVYALYTAIKHSPLTKHVVLPPLYEIMPHFFTSSEVIQQAYRAKMIGQPGKFNMNFTGTQNNPEHKIAYFGEDIGLSTHYINWHIEYPFWWNETFGYQIERRGENYFWVHHQLVNRFEAERISNHLQKIEKLHWERNLHEGFDPHTSYKNGEHFPFRHDDIHIEDVDKVAEVRDMIVMENRIRDAIAHGYVIDKEGNKVDINNEHGIDILGEIIESCVYNPYNEYYGSLHNMGHMMLGHQGDPHAKYYDTPSVLEHYETTLRDPAFYKLHKYIDDLFRKHKDHLKPYSRKELLFPGIAINNIHIDGPLETYFEDYEYSLMNAMDDKEEMKWEDNMEISAIIPRLRHKDFSFKVNIMNNNDENKLATIRIFAWPHRDVNGVIMPFNEGRWHAIELDKFWKYLAPGENEVTRKCDESSVTVPDVPSLKSLHEQAEAAIAGISELNLEEFVSATGLPNRLLIPKGNAAGVEFKLVVAVTDGEADSVNDEINLTTKFHHYGHHGVYLDKKSHGYPLDRRVPDERLFHEIPNFGETIVKVFNHNEHVHRHE</sequence>
<gene>
    <name evidence="5" type="primary">phc-1</name>
</gene>
<proteinExistence type="evidence at protein level"/>
<keyword id="KW-0903">Direct protein sequencing</keyword>
<keyword id="KW-0325">Glycoprotein</keyword>
<keyword id="KW-0732">Signal</keyword>
<feature type="signal peptide" evidence="3">
    <location>
        <begin position="1" status="less than"/>
        <end position="23"/>
    </location>
</feature>
<feature type="chain" id="PRO_0000234529" description="Pseudohemocyanin-1">
    <location>
        <begin position="24"/>
        <end position="684"/>
    </location>
</feature>
<feature type="region of interest" description="Disordered" evidence="2">
    <location>
        <begin position="7"/>
        <end position="32"/>
    </location>
</feature>
<feature type="glycosylation site" description="N-linked (GlcNAc...) asparagine" evidence="1">
    <location>
        <position position="100"/>
    </location>
</feature>
<feature type="glycosylation site" description="N-linked (GlcNAc...) asparagine" evidence="1">
    <location>
        <position position="193"/>
    </location>
</feature>
<feature type="glycosylation site" description="N-linked (GlcNAc...) asparagine" evidence="1">
    <location>
        <position position="230"/>
    </location>
</feature>
<feature type="glycosylation site" description="N-linked (GlcNAc...) asparagine" evidence="1">
    <location>
        <position position="626"/>
    </location>
</feature>
<feature type="non-terminal residue" evidence="5">
    <location>
        <position position="1"/>
    </location>
</feature>
<protein>
    <recommendedName>
        <fullName>Pseudohemocyanin-1</fullName>
    </recommendedName>
</protein>
<comment type="function">
    <text evidence="3">Does not function as a hemocyanin.</text>
</comment>
<comment type="subunit">
    <text evidence="3">Hexamer.</text>
</comment>
<comment type="tissue specificity">
    <text evidence="3">Strongly expressed in ovaries. Also expressed in heart. Not detected in hepatopancreas, gills, connective tissue or muscle.</text>
</comment>
<comment type="miscellaneous">
    <text evidence="3">Does not bind copper.</text>
</comment>
<comment type="similarity">
    <text evidence="1">Belongs to the tyrosinase family. Hemocyanin subfamily.</text>
</comment>
<organism>
    <name type="scientific">Homarus americanus</name>
    <name type="common">American lobster</name>
    <dbReference type="NCBI Taxonomy" id="6706"/>
    <lineage>
        <taxon>Eukaryota</taxon>
        <taxon>Metazoa</taxon>
        <taxon>Ecdysozoa</taxon>
        <taxon>Arthropoda</taxon>
        <taxon>Crustacea</taxon>
        <taxon>Multicrustacea</taxon>
        <taxon>Malacostraca</taxon>
        <taxon>Eumalacostraca</taxon>
        <taxon>Eucarida</taxon>
        <taxon>Decapoda</taxon>
        <taxon>Pleocyemata</taxon>
        <taxon>Astacidea</taxon>
        <taxon>Nephropoidea</taxon>
        <taxon>Nephropidae</taxon>
        <taxon>Homarus</taxon>
    </lineage>
</organism>